<comment type="function">
    <text evidence="2 3">Catalytic subunit of the poly(A)-nuclease (PAN) deadenylation complex, one of two cytoplasmic mRNA deadenylases involved in general and miRNA-mediated mRNA turnover. PAN specifically shortens poly(A) tails of RNA and the activity is stimulated by poly(A)-binding protein (PABP). PAN deadenylation is followed by rapid degradation of the shortened mRNA tails by the CCR4-NOT complex. Deadenylated mRNAs are then degraded by two alternative mechanisms, namely exosome-mediated 3'-5' exonucleolytic degradation, or deadenylation-dependent mRNA decaping and subsequent 5'-3' exonucleolytic degradation by XRN1 (PubMed:16284618). Also acts as an important regulator of the HIF1A-mediated hypoxic response. Required for HIF1A mRNA stability independent of poly(A) tail length regulation (By similarity).</text>
</comment>
<comment type="catalytic activity">
    <reaction evidence="2">
        <text>Exonucleolytic cleavage of poly(A) to 5'-AMP.</text>
        <dbReference type="EC" id="3.1.13.4"/>
    </reaction>
</comment>
<comment type="cofactor">
    <cofactor evidence="2">
        <name>a divalent metal cation</name>
        <dbReference type="ChEBI" id="CHEBI:60240"/>
    </cofactor>
    <text evidence="2">Binds 2 metal cations per subunit in the catalytic exonuclease domain.</text>
</comment>
<comment type="activity regulation">
    <text evidence="2">Positively regulated by the regulatory subunit PAN3.</text>
</comment>
<comment type="subunit">
    <text evidence="1 2 5">Forms a heterotrimer with an asymmetric homodimer of the regulatory subunit PAN3 to form the poly(A)-nuclease (PAN) deadenylation complex (By similarity). Interacts with PAN3 isoform 1/Pan3L and isoform 3/Pan3S (By similarity). Interacts with ZFP36 (PubMed:21078877).</text>
</comment>
<comment type="subcellular location">
    <subcellularLocation>
        <location evidence="2 4">Cytoplasm</location>
        <location evidence="2 4">P-body</location>
    </subcellularLocation>
    <subcellularLocation>
        <location evidence="2">Nucleus</location>
    </subcellularLocation>
    <text evidence="2">Shuttles between nucleus and cytoplasm.</text>
</comment>
<comment type="alternative products">
    <event type="alternative splicing"/>
    <isoform>
        <id>Q8BGF7-1</id>
        <name>1</name>
        <sequence type="displayed"/>
    </isoform>
    <isoform>
        <id>Q8BGF7-2</id>
        <name>2</name>
        <sequence type="described" ref="VSP_023752"/>
    </isoform>
    <isoform>
        <id>Q8BGF7-3</id>
        <name>3</name>
        <sequence type="described" ref="VSP_023750 VSP_023752"/>
    </isoform>
    <isoform>
        <id>Q8BGF7-4</id>
        <name>4</name>
        <sequence type="described" ref="VSP_023751"/>
    </isoform>
</comment>
<comment type="domain">
    <text evidence="2">Contains a pseudo-UCH domain. This ubiquitin C-terminal hydrolase (UCH)-like or ubiquitin specific protease (USP)-like domain is predicted to be catalytically inactive because it lacks the active site catalytic triad characteristic of thiol proteases, with residues at the equivalent structural positions that are incompatible with catalysis, and it cannot bind ubiquitin. It functions as a structural scaffold for intra- and intermolecular interactions in the complex.</text>
</comment>
<comment type="domain">
    <text evidence="2">The linker, or PAN3 interaction domain (PID), between the WD40 repeats and the pseudo-UCH domain mediates interaction with PAN3.</text>
</comment>
<comment type="similarity">
    <text evidence="2">Belongs to the peptidase C19 family. PAN2 subfamily.</text>
</comment>
<comment type="sequence caution" evidence="9">
    <conflict type="erroneous initiation">
        <sequence resource="EMBL-CDS" id="BAC98006"/>
    </conflict>
</comment>
<reference key="1">
    <citation type="journal article" date="2003" name="DNA Res.">
        <title>Prediction of the coding sequences of mouse homologues of KIAA gene: III. The complete nucleotide sequences of 500 mouse KIAA-homologous cDNAs identified by screening of terminal sequences of cDNA clones randomly sampled from size-fractionated libraries.</title>
        <authorList>
            <person name="Okazaki N."/>
            <person name="Kikuno R."/>
            <person name="Ohara R."/>
            <person name="Inamoto S."/>
            <person name="Koseki H."/>
            <person name="Hiraoka S."/>
            <person name="Saga Y."/>
            <person name="Nagase T."/>
            <person name="Ohara O."/>
            <person name="Koga H."/>
        </authorList>
    </citation>
    <scope>NUCLEOTIDE SEQUENCE [LARGE SCALE MRNA] (ISOFORM 4)</scope>
    <source>
        <tissue>Embryonic tail</tissue>
    </source>
</reference>
<reference key="2">
    <citation type="submission" date="2003-12" db="EMBL/GenBank/DDBJ databases">
        <authorList>
            <person name="Okazaki N."/>
            <person name="Kikuno R."/>
            <person name="Nagase T."/>
            <person name="Ohara O."/>
            <person name="Koga H."/>
        </authorList>
    </citation>
    <scope>SEQUENCE REVISION</scope>
</reference>
<reference key="3">
    <citation type="journal article" date="2005" name="Science">
        <title>The transcriptional landscape of the mammalian genome.</title>
        <authorList>
            <person name="Carninci P."/>
            <person name="Kasukawa T."/>
            <person name="Katayama S."/>
            <person name="Gough J."/>
            <person name="Frith M.C."/>
            <person name="Maeda N."/>
            <person name="Oyama R."/>
            <person name="Ravasi T."/>
            <person name="Lenhard B."/>
            <person name="Wells C."/>
            <person name="Kodzius R."/>
            <person name="Shimokawa K."/>
            <person name="Bajic V.B."/>
            <person name="Brenner S.E."/>
            <person name="Batalov S."/>
            <person name="Forrest A.R."/>
            <person name="Zavolan M."/>
            <person name="Davis M.J."/>
            <person name="Wilming L.G."/>
            <person name="Aidinis V."/>
            <person name="Allen J.E."/>
            <person name="Ambesi-Impiombato A."/>
            <person name="Apweiler R."/>
            <person name="Aturaliya R.N."/>
            <person name="Bailey T.L."/>
            <person name="Bansal M."/>
            <person name="Baxter L."/>
            <person name="Beisel K.W."/>
            <person name="Bersano T."/>
            <person name="Bono H."/>
            <person name="Chalk A.M."/>
            <person name="Chiu K.P."/>
            <person name="Choudhary V."/>
            <person name="Christoffels A."/>
            <person name="Clutterbuck D.R."/>
            <person name="Crowe M.L."/>
            <person name="Dalla E."/>
            <person name="Dalrymple B.P."/>
            <person name="de Bono B."/>
            <person name="Della Gatta G."/>
            <person name="di Bernardo D."/>
            <person name="Down T."/>
            <person name="Engstrom P."/>
            <person name="Fagiolini M."/>
            <person name="Faulkner G."/>
            <person name="Fletcher C.F."/>
            <person name="Fukushima T."/>
            <person name="Furuno M."/>
            <person name="Futaki S."/>
            <person name="Gariboldi M."/>
            <person name="Georgii-Hemming P."/>
            <person name="Gingeras T.R."/>
            <person name="Gojobori T."/>
            <person name="Green R.E."/>
            <person name="Gustincich S."/>
            <person name="Harbers M."/>
            <person name="Hayashi Y."/>
            <person name="Hensch T.K."/>
            <person name="Hirokawa N."/>
            <person name="Hill D."/>
            <person name="Huminiecki L."/>
            <person name="Iacono M."/>
            <person name="Ikeo K."/>
            <person name="Iwama A."/>
            <person name="Ishikawa T."/>
            <person name="Jakt M."/>
            <person name="Kanapin A."/>
            <person name="Katoh M."/>
            <person name="Kawasawa Y."/>
            <person name="Kelso J."/>
            <person name="Kitamura H."/>
            <person name="Kitano H."/>
            <person name="Kollias G."/>
            <person name="Krishnan S.P."/>
            <person name="Kruger A."/>
            <person name="Kummerfeld S.K."/>
            <person name="Kurochkin I.V."/>
            <person name="Lareau L.F."/>
            <person name="Lazarevic D."/>
            <person name="Lipovich L."/>
            <person name="Liu J."/>
            <person name="Liuni S."/>
            <person name="McWilliam S."/>
            <person name="Madan Babu M."/>
            <person name="Madera M."/>
            <person name="Marchionni L."/>
            <person name="Matsuda H."/>
            <person name="Matsuzawa S."/>
            <person name="Miki H."/>
            <person name="Mignone F."/>
            <person name="Miyake S."/>
            <person name="Morris K."/>
            <person name="Mottagui-Tabar S."/>
            <person name="Mulder N."/>
            <person name="Nakano N."/>
            <person name="Nakauchi H."/>
            <person name="Ng P."/>
            <person name="Nilsson R."/>
            <person name="Nishiguchi S."/>
            <person name="Nishikawa S."/>
            <person name="Nori F."/>
            <person name="Ohara O."/>
            <person name="Okazaki Y."/>
            <person name="Orlando V."/>
            <person name="Pang K.C."/>
            <person name="Pavan W.J."/>
            <person name="Pavesi G."/>
            <person name="Pesole G."/>
            <person name="Petrovsky N."/>
            <person name="Piazza S."/>
            <person name="Reed J."/>
            <person name="Reid J.F."/>
            <person name="Ring B.Z."/>
            <person name="Ringwald M."/>
            <person name="Rost B."/>
            <person name="Ruan Y."/>
            <person name="Salzberg S.L."/>
            <person name="Sandelin A."/>
            <person name="Schneider C."/>
            <person name="Schoenbach C."/>
            <person name="Sekiguchi K."/>
            <person name="Semple C.A."/>
            <person name="Seno S."/>
            <person name="Sessa L."/>
            <person name="Sheng Y."/>
            <person name="Shibata Y."/>
            <person name="Shimada H."/>
            <person name="Shimada K."/>
            <person name="Silva D."/>
            <person name="Sinclair B."/>
            <person name="Sperling S."/>
            <person name="Stupka E."/>
            <person name="Sugiura K."/>
            <person name="Sultana R."/>
            <person name="Takenaka Y."/>
            <person name="Taki K."/>
            <person name="Tammoja K."/>
            <person name="Tan S.L."/>
            <person name="Tang S."/>
            <person name="Taylor M.S."/>
            <person name="Tegner J."/>
            <person name="Teichmann S.A."/>
            <person name="Ueda H.R."/>
            <person name="van Nimwegen E."/>
            <person name="Verardo R."/>
            <person name="Wei C.L."/>
            <person name="Yagi K."/>
            <person name="Yamanishi H."/>
            <person name="Zabarovsky E."/>
            <person name="Zhu S."/>
            <person name="Zimmer A."/>
            <person name="Hide W."/>
            <person name="Bult C."/>
            <person name="Grimmond S.M."/>
            <person name="Teasdale R.D."/>
            <person name="Liu E.T."/>
            <person name="Brusic V."/>
            <person name="Quackenbush J."/>
            <person name="Wahlestedt C."/>
            <person name="Mattick J.S."/>
            <person name="Hume D.A."/>
            <person name="Kai C."/>
            <person name="Sasaki D."/>
            <person name="Tomaru Y."/>
            <person name="Fukuda S."/>
            <person name="Kanamori-Katayama M."/>
            <person name="Suzuki M."/>
            <person name="Aoki J."/>
            <person name="Arakawa T."/>
            <person name="Iida J."/>
            <person name="Imamura K."/>
            <person name="Itoh M."/>
            <person name="Kato T."/>
            <person name="Kawaji H."/>
            <person name="Kawagashira N."/>
            <person name="Kawashima T."/>
            <person name="Kojima M."/>
            <person name="Kondo S."/>
            <person name="Konno H."/>
            <person name="Nakano K."/>
            <person name="Ninomiya N."/>
            <person name="Nishio T."/>
            <person name="Okada M."/>
            <person name="Plessy C."/>
            <person name="Shibata K."/>
            <person name="Shiraki T."/>
            <person name="Suzuki S."/>
            <person name="Tagami M."/>
            <person name="Waki K."/>
            <person name="Watahiki A."/>
            <person name="Okamura-Oho Y."/>
            <person name="Suzuki H."/>
            <person name="Kawai J."/>
            <person name="Hayashizaki Y."/>
        </authorList>
    </citation>
    <scope>NUCLEOTIDE SEQUENCE [LARGE SCALE MRNA] (ISOFORMS 1 AND 3)</scope>
    <source>
        <strain>C57BL/6J</strain>
        <strain>NOD</strain>
        <tissue>Embryo</tissue>
        <tissue>Embryonic head</tissue>
        <tissue>Thymus</tissue>
    </source>
</reference>
<reference key="4">
    <citation type="journal article" date="2004" name="Genome Res.">
        <title>The status, quality, and expansion of the NIH full-length cDNA project: the Mammalian Gene Collection (MGC).</title>
        <authorList>
            <consortium name="The MGC Project Team"/>
        </authorList>
    </citation>
    <scope>NUCLEOTIDE SEQUENCE [LARGE SCALE MRNA] (ISOFORMS 1 AND 2)</scope>
    <source>
        <strain>C57BL/6J</strain>
        <tissue>Embryonic brain</tissue>
        <tissue>Eye</tissue>
    </source>
</reference>
<reference key="5">
    <citation type="journal article" date="2005" name="Nat. Struct. Mol. Biol.">
        <title>Concerted action of poly(A) nucleases and decapping enzyme in mammalian mRNA turnover.</title>
        <authorList>
            <person name="Yamashita A."/>
            <person name="Chang T.-C."/>
            <person name="Yamashita Y."/>
            <person name="Zhu W."/>
            <person name="Zhong Z."/>
            <person name="Chen C.-Y.A."/>
            <person name="Shyu A.-B."/>
        </authorList>
    </citation>
    <scope>FUNCTION</scope>
</reference>
<reference key="6">
    <citation type="journal article" date="2008" name="J. Cell Biol.">
        <title>Deadenylation is prerequisite for P-body formation and mRNA decay in mammalian cells.</title>
        <authorList>
            <person name="Zheng D."/>
            <person name="Ezzeddine N."/>
            <person name="Chen C.Y."/>
            <person name="Zhu W."/>
            <person name="He X."/>
            <person name="Shyu A.B."/>
        </authorList>
    </citation>
    <scope>SUBCELLULAR LOCATION</scope>
</reference>
<reference key="7">
    <citation type="journal article" date="2010" name="Cell">
        <title>A tissue-specific atlas of mouse protein phosphorylation and expression.</title>
        <authorList>
            <person name="Huttlin E.L."/>
            <person name="Jedrychowski M.P."/>
            <person name="Elias J.E."/>
            <person name="Goswami T."/>
            <person name="Rad R."/>
            <person name="Beausoleil S.A."/>
            <person name="Villen J."/>
            <person name="Haas W."/>
            <person name="Sowa M.E."/>
            <person name="Gygi S.P."/>
        </authorList>
    </citation>
    <scope>PHOSPHORYLATION [LARGE SCALE ANALYSIS] AT SER-784</scope>
    <scope>IDENTIFICATION BY MASS SPECTROMETRY [LARGE SCALE ANALYSIS]</scope>
    <source>
        <tissue>Brain</tissue>
        <tissue>Kidney</tissue>
        <tissue>Lung</tissue>
        <tissue>Spleen</tissue>
    </source>
</reference>
<reference key="8">
    <citation type="journal article" date="2011" name="Mol. Cell. Biol.">
        <title>Phosphorylation of tristetraprolin by MK2 impairs AU-rich element mRNA decay by preventing deadenylase recruitment.</title>
        <authorList>
            <person name="Clement S.L."/>
            <person name="Scheckel C."/>
            <person name="Stoecklin G."/>
            <person name="Lykke-Andersen J."/>
        </authorList>
    </citation>
    <scope>INTERACTION WITH ZFP36</scope>
</reference>
<keyword id="KW-0025">Alternative splicing</keyword>
<keyword id="KW-0963">Cytoplasm</keyword>
<keyword id="KW-0269">Exonuclease</keyword>
<keyword id="KW-0378">Hydrolase</keyword>
<keyword id="KW-0479">Metal-binding</keyword>
<keyword id="KW-0507">mRNA processing</keyword>
<keyword id="KW-0540">Nuclease</keyword>
<keyword id="KW-0539">Nucleus</keyword>
<keyword id="KW-0597">Phosphoprotein</keyword>
<keyword id="KW-1185">Reference proteome</keyword>
<keyword id="KW-0677">Repeat</keyword>
<keyword id="KW-0853">WD repeat</keyword>
<evidence type="ECO:0000250" key="1">
    <source>
        <dbReference type="UniProtKB" id="Q504Q3"/>
    </source>
</evidence>
<evidence type="ECO:0000255" key="2">
    <source>
        <dbReference type="HAMAP-Rule" id="MF_03182"/>
    </source>
</evidence>
<evidence type="ECO:0000269" key="3">
    <source>
    </source>
</evidence>
<evidence type="ECO:0000269" key="4">
    <source>
    </source>
</evidence>
<evidence type="ECO:0000269" key="5">
    <source>
    </source>
</evidence>
<evidence type="ECO:0000303" key="6">
    <source>
    </source>
</evidence>
<evidence type="ECO:0000303" key="7">
    <source>
    </source>
</evidence>
<evidence type="ECO:0000303" key="8">
    <source>
    </source>
</evidence>
<evidence type="ECO:0000305" key="9"/>
<evidence type="ECO:0007744" key="10">
    <source>
    </source>
</evidence>
<protein>
    <recommendedName>
        <fullName evidence="2">PAN2-PAN3 deadenylation complex catalytic subunit Pan2</fullName>
        <ecNumber evidence="2">3.1.13.4</ecNumber>
    </recommendedName>
    <alternativeName>
        <fullName evidence="2">Inactive ubiquitin carboxyl-terminal hydrolase 52</fullName>
    </alternativeName>
    <alternativeName>
        <fullName evidence="2">PAB1P-dependent poly(A)-specific ribonuclease</fullName>
    </alternativeName>
    <alternativeName>
        <fullName evidence="2">Poly(A)-nuclease deadenylation complex subunit 2</fullName>
        <shortName evidence="2">PAN deadenylation complex subunit 2</shortName>
    </alternativeName>
</protein>
<sequence>MNFEGLDPGLAEFSPAMHSTLDPVLDAHLNPSLLQNVELDPEGVALEALPVQESVHIMEGVYSELHSVVAEVGVPVSVSHFDLHEEMLWVGSHGGHATSFFGPALERYSSFQVNGGDDIRQIQSLENGILFLTKNNLKYMARGGLIIFDYLLDENEDMHSVLLTDNSTLLVGGLQNHVLEIDLNTVQETQKYAVETPGVTIMRQTNRFFFCGHTSGKVSLRDLRSFKVEHEFDAFSGSLSDFDVHGNLLAACGFSSRLTGLACDRFLKVYDLRMMRAITPLQVHVDPAFLRFIPTYTSRLAIISQSGQCQFCEPTGLANPADIFHVNPVGPLLMTFDVSASKQALAFGDSEGCVHLWTDSPEPSFNPYSRETEFALPCLVDSLPPLDWSQDLLPLSLIPVPLTTDALLSDWPAANSAPAPRRAPPVDAEILRTMKKVGFIGYAPNPRTRLRNQIPYRLKESDHEFDNFSQVTESPTGREEEPLHTVSKKYRKVTIKYSKLGLEDFDFKHYNKTLFAGLEPHIPNAYCNCMIQVLYFLEPVRCLIQNHLCQKEFCLACELGFLFHMLDLSRGDPCQGSNFLRAFRTIPEASALGLILADSDEASGKGSLARLIQRWNRFILTQLHQDMQELEVPQAYRGAGGSFCSSGDSIIGQLFSCEMENCSLCRCGSETVRASSTLLFTLSYPEDKTGKNYDFAQVLKRSICLEQNTQAWCDNCEKYQPTIQTRNIRHLPDILVINCEVNSSKEADFWRLQAEVAFKIAVKKYGGEMKSKEFALADRKELRSPEGFLCSSIEELKNVWLPFSIRMKMTKNKGLDVCNWADEHELSSLGAPSQWGPARAEEELGVYVYDLMATVVHILDSRTGGSLVAHIKVGETYHQRKEGVTHQQWYLFNDFLIEPIDKYEAVQFDMNWKVPAILYYVKRNLNSRYNLNIKNPIEASVLLAEASLARKQRKTHTTFIPLMLNEMPQVGDLVGLDAEFVTLNEEEAELRSDGTKSTIKPSQMSVARITCVRGQGPNEGIPFIDDYISTQEQVVDYLTQYSGIKPGDLDAKISSKHLTTLKSTYLKLRFLIDIGVKFVGHGLQKDFRVINLMVPKDQVLDTVYLFHMPRKRMISLRFLAWYFLDLKIQGETHDSIEDARTALQLYRKYLELSKNGTEPESFHKVLKGLYEKGRKMDWKVPEPESQTSPKNAAVFSVLAL</sequence>
<name>PAN2_MOUSE</name>
<feature type="chain" id="PRO_0000280522" description="PAN2-PAN3 deadenylation complex catalytic subunit Pan2">
    <location>
        <begin position="1"/>
        <end position="1200"/>
    </location>
</feature>
<feature type="repeat" description="WD 1" evidence="2">
    <location>
        <begin position="153"/>
        <end position="193"/>
    </location>
</feature>
<feature type="repeat" description="WD 2" evidence="2">
    <location>
        <begin position="195"/>
        <end position="231"/>
    </location>
</feature>
<feature type="repeat" description="WD 3" evidence="2">
    <location>
        <begin position="244"/>
        <end position="280"/>
    </location>
</feature>
<feature type="repeat" description="WD 4" evidence="2">
    <location>
        <begin position="328"/>
        <end position="367"/>
    </location>
</feature>
<feature type="domain" description="USP" evidence="2">
    <location>
        <begin position="485"/>
        <end position="923"/>
    </location>
</feature>
<feature type="domain" description="Exonuclease" evidence="2">
    <location>
        <begin position="974"/>
        <end position="1146"/>
    </location>
</feature>
<feature type="region of interest" description="Linker" evidence="2">
    <location>
        <begin position="368"/>
        <end position="484"/>
    </location>
</feature>
<feature type="binding site" evidence="2">
    <location>
        <position position="977"/>
    </location>
    <ligand>
        <name>a divalent metal cation</name>
        <dbReference type="ChEBI" id="CHEBI:60240"/>
        <note>catalytic</note>
    </ligand>
</feature>
<feature type="binding site" evidence="2">
    <location>
        <position position="979"/>
    </location>
    <ligand>
        <name>a divalent metal cation</name>
        <dbReference type="ChEBI" id="CHEBI:60240"/>
        <note>catalytic</note>
    </ligand>
</feature>
<feature type="binding site" evidence="2">
    <location>
        <position position="1086"/>
    </location>
    <ligand>
        <name>a divalent metal cation</name>
        <dbReference type="ChEBI" id="CHEBI:60240"/>
        <note>catalytic</note>
    </ligand>
</feature>
<feature type="binding site" evidence="2">
    <location>
        <position position="1138"/>
    </location>
    <ligand>
        <name>a divalent metal cation</name>
        <dbReference type="ChEBI" id="CHEBI:60240"/>
        <note>catalytic</note>
    </ligand>
</feature>
<feature type="modified residue" description="Phosphoserine" evidence="10">
    <location>
        <position position="784"/>
    </location>
</feature>
<feature type="modified residue" description="Phosphoserine" evidence="1">
    <location>
        <position position="1188"/>
    </location>
</feature>
<feature type="splice variant" id="VSP_023750" description="In isoform 3." evidence="8">
    <location>
        <begin position="95"/>
        <end position="112"/>
    </location>
</feature>
<feature type="splice variant" id="VSP_023751" description="In isoform 4." evidence="6">
    <original>DKTGKNYDFAQVLKRSICLEQNTQAWCDNCEKYQPT</original>
    <variation>GS</variation>
    <location>
        <begin position="687"/>
        <end position="722"/>
    </location>
</feature>
<feature type="splice variant" id="VSP_023752" description="In isoform 2 and isoform 3." evidence="7 8">
    <location>
        <begin position="826"/>
        <end position="834"/>
    </location>
</feature>
<feature type="sequence conflict" description="In Ref. 3; BAE34203." evidence="9" ref="3">
    <original>Q</original>
    <variation>L</variation>
    <location>
        <position position="175"/>
    </location>
</feature>
<accession>Q8BGF7</accession>
<accession>Q3TZK5</accession>
<accession>Q68FH6</accession>
<accession>Q6ZQ63</accession>
<dbReference type="EC" id="3.1.13.4" evidence="2"/>
<dbReference type="EMBL" id="AK129196">
    <property type="protein sequence ID" value="BAC98006.2"/>
    <property type="status" value="ALT_INIT"/>
    <property type="molecule type" value="Transcribed_RNA"/>
</dbReference>
<dbReference type="EMBL" id="AK047887">
    <property type="protein sequence ID" value="BAC33183.1"/>
    <property type="molecule type" value="mRNA"/>
</dbReference>
<dbReference type="EMBL" id="AK089001">
    <property type="protein sequence ID" value="BAC40693.1"/>
    <property type="molecule type" value="mRNA"/>
</dbReference>
<dbReference type="EMBL" id="AK157800">
    <property type="protein sequence ID" value="BAE34203.1"/>
    <property type="molecule type" value="mRNA"/>
</dbReference>
<dbReference type="EMBL" id="BC075686">
    <property type="protein sequence ID" value="AAH75686.1"/>
    <property type="molecule type" value="mRNA"/>
</dbReference>
<dbReference type="EMBL" id="BC079841">
    <property type="protein sequence ID" value="AAH79841.1"/>
    <property type="molecule type" value="mRNA"/>
</dbReference>
<dbReference type="CCDS" id="CCDS24271.1">
    <molecule id="Q8BGF7-1"/>
</dbReference>
<dbReference type="CCDS" id="CCDS88107.1">
    <molecule id="Q8BGF7-2"/>
</dbReference>
<dbReference type="CCDS" id="CCDS88108.1">
    <molecule id="Q8BGF7-3"/>
</dbReference>
<dbReference type="RefSeq" id="NP_001239255.1">
    <molecule id="Q8BGF7-2"/>
    <property type="nucleotide sequence ID" value="NM_001252326.1"/>
</dbReference>
<dbReference type="RefSeq" id="NP_001239256.1">
    <molecule id="Q8BGF7-3"/>
    <property type="nucleotide sequence ID" value="NM_001252327.1"/>
</dbReference>
<dbReference type="RefSeq" id="NP_598753.1">
    <molecule id="Q8BGF7-1"/>
    <property type="nucleotide sequence ID" value="NM_133992.3"/>
</dbReference>
<dbReference type="SMR" id="Q8BGF7"/>
<dbReference type="BioGRID" id="222025">
    <property type="interactions" value="5"/>
</dbReference>
<dbReference type="FunCoup" id="Q8BGF7">
    <property type="interactions" value="2728"/>
</dbReference>
<dbReference type="IntAct" id="Q8BGF7">
    <property type="interactions" value="1"/>
</dbReference>
<dbReference type="STRING" id="10090.ENSMUSP00000005825"/>
<dbReference type="MEROPS" id="C19.978"/>
<dbReference type="iPTMnet" id="Q8BGF7"/>
<dbReference type="PhosphoSitePlus" id="Q8BGF7"/>
<dbReference type="jPOST" id="Q8BGF7"/>
<dbReference type="PaxDb" id="10090-ENSMUSP00000005825"/>
<dbReference type="PeptideAtlas" id="Q8BGF7"/>
<dbReference type="ProteomicsDB" id="287942">
    <molecule id="Q8BGF7-1"/>
</dbReference>
<dbReference type="ProteomicsDB" id="287943">
    <molecule id="Q8BGF7-2"/>
</dbReference>
<dbReference type="ProteomicsDB" id="287944">
    <molecule id="Q8BGF7-3"/>
</dbReference>
<dbReference type="ProteomicsDB" id="287945">
    <molecule id="Q8BGF7-4"/>
</dbReference>
<dbReference type="Pumba" id="Q8BGF7"/>
<dbReference type="Antibodypedia" id="28142">
    <property type="antibodies" value="130 antibodies from 25 providers"/>
</dbReference>
<dbReference type="DNASU" id="103135"/>
<dbReference type="Ensembl" id="ENSMUST00000005825.8">
    <molecule id="Q8BGF7-1"/>
    <property type="protein sequence ID" value="ENSMUSP00000005825.7"/>
    <property type="gene ID" value="ENSMUSG00000005682.10"/>
</dbReference>
<dbReference type="Ensembl" id="ENSMUST00000218315.2">
    <molecule id="Q8BGF7-2"/>
    <property type="protein sequence ID" value="ENSMUSP00000151216.2"/>
    <property type="gene ID" value="ENSMUSG00000005682.10"/>
</dbReference>
<dbReference type="Ensembl" id="ENSMUST00000219721.2">
    <molecule id="Q8BGF7-3"/>
    <property type="protein sequence ID" value="ENSMUSP00000151874.2"/>
    <property type="gene ID" value="ENSMUSG00000005682.10"/>
</dbReference>
<dbReference type="GeneID" id="103135"/>
<dbReference type="KEGG" id="mmu:103135"/>
<dbReference type="UCSC" id="uc007hme.2">
    <molecule id="Q8BGF7-1"/>
    <property type="organism name" value="mouse"/>
</dbReference>
<dbReference type="UCSC" id="uc007hmf.2">
    <molecule id="Q8BGF7-2"/>
    <property type="organism name" value="mouse"/>
</dbReference>
<dbReference type="UCSC" id="uc007hmg.2">
    <molecule id="Q8BGF7-3"/>
    <property type="organism name" value="mouse"/>
</dbReference>
<dbReference type="AGR" id="MGI:1918984"/>
<dbReference type="CTD" id="9924"/>
<dbReference type="MGI" id="MGI:1918984">
    <property type="gene designation" value="Pan2"/>
</dbReference>
<dbReference type="VEuPathDB" id="HostDB:ENSMUSG00000005682"/>
<dbReference type="eggNOG" id="KOG1275">
    <property type="taxonomic scope" value="Eukaryota"/>
</dbReference>
<dbReference type="GeneTree" id="ENSGT00390000013978"/>
<dbReference type="HOGENOM" id="CLU_002369_0_0_1"/>
<dbReference type="InParanoid" id="Q8BGF7"/>
<dbReference type="OMA" id="TQELLWT"/>
<dbReference type="OrthoDB" id="16516at2759"/>
<dbReference type="PhylomeDB" id="Q8BGF7"/>
<dbReference type="TreeFam" id="TF105657"/>
<dbReference type="Reactome" id="R-MMU-429947">
    <property type="pathway name" value="Deadenylation of mRNA"/>
</dbReference>
<dbReference type="BioGRID-ORCS" id="103135">
    <property type="hits" value="7 hits in 76 CRISPR screens"/>
</dbReference>
<dbReference type="ChiTaRS" id="Pan2">
    <property type="organism name" value="mouse"/>
</dbReference>
<dbReference type="PRO" id="PR:Q8BGF7"/>
<dbReference type="Proteomes" id="UP000000589">
    <property type="component" value="Chromosome 10"/>
</dbReference>
<dbReference type="RNAct" id="Q8BGF7">
    <property type="molecule type" value="protein"/>
</dbReference>
<dbReference type="Bgee" id="ENSMUSG00000005682">
    <property type="expression patterns" value="Expressed in secondary oocyte and 246 other cell types or tissues"/>
</dbReference>
<dbReference type="GO" id="GO:0005737">
    <property type="term" value="C:cytoplasm"/>
    <property type="evidence" value="ECO:0000266"/>
    <property type="project" value="MGI"/>
</dbReference>
<dbReference type="GO" id="GO:0005634">
    <property type="term" value="C:nucleus"/>
    <property type="evidence" value="ECO:0007669"/>
    <property type="project" value="UniProtKB-SubCell"/>
</dbReference>
<dbReference type="GO" id="GO:0000932">
    <property type="term" value="C:P-body"/>
    <property type="evidence" value="ECO:0000314"/>
    <property type="project" value="MGI"/>
</dbReference>
<dbReference type="GO" id="GO:0031251">
    <property type="term" value="C:PAN complex"/>
    <property type="evidence" value="ECO:0000250"/>
    <property type="project" value="UniProtKB"/>
</dbReference>
<dbReference type="GO" id="GO:0000175">
    <property type="term" value="F:3'-5'-RNA exonuclease activity"/>
    <property type="evidence" value="ECO:0000250"/>
    <property type="project" value="UniProtKB"/>
</dbReference>
<dbReference type="GO" id="GO:0046872">
    <property type="term" value="F:metal ion binding"/>
    <property type="evidence" value="ECO:0007669"/>
    <property type="project" value="UniProtKB-KW"/>
</dbReference>
<dbReference type="GO" id="GO:0003676">
    <property type="term" value="F:nucleic acid binding"/>
    <property type="evidence" value="ECO:0007669"/>
    <property type="project" value="InterPro"/>
</dbReference>
<dbReference type="GO" id="GO:0004535">
    <property type="term" value="F:poly(A)-specific ribonuclease activity"/>
    <property type="evidence" value="ECO:0000250"/>
    <property type="project" value="UniProtKB"/>
</dbReference>
<dbReference type="GO" id="GO:0006397">
    <property type="term" value="P:mRNA processing"/>
    <property type="evidence" value="ECO:0007669"/>
    <property type="project" value="UniProtKB-KW"/>
</dbReference>
<dbReference type="GO" id="GO:0000956">
    <property type="term" value="P:nuclear-transcribed mRNA catabolic process"/>
    <property type="evidence" value="ECO:0000266"/>
    <property type="project" value="MGI"/>
</dbReference>
<dbReference type="GO" id="GO:0000289">
    <property type="term" value="P:nuclear-transcribed mRNA poly(A) tail shortening"/>
    <property type="evidence" value="ECO:0000266"/>
    <property type="project" value="MGI"/>
</dbReference>
<dbReference type="GO" id="GO:0010606">
    <property type="term" value="P:positive regulation of cytoplasmic mRNA processing body assembly"/>
    <property type="evidence" value="ECO:0007669"/>
    <property type="project" value="UniProtKB-UniRule"/>
</dbReference>
<dbReference type="CDD" id="cd06143">
    <property type="entry name" value="PAN2_exo"/>
    <property type="match status" value="1"/>
</dbReference>
<dbReference type="CDD" id="cd02672">
    <property type="entry name" value="Peptidase_C19P"/>
    <property type="match status" value="1"/>
</dbReference>
<dbReference type="FunFam" id="2.130.10.10:FF:000059">
    <property type="entry name" value="PAN2-PAN3 deadenylation complex catalytic subunit PAN2"/>
    <property type="match status" value="1"/>
</dbReference>
<dbReference type="FunFam" id="3.30.420.10:FF:000011">
    <property type="entry name" value="PAN2-PAN3 deadenylation complex catalytic subunit PAN2"/>
    <property type="match status" value="1"/>
</dbReference>
<dbReference type="FunFam" id="3.90.70.10:FF:000017">
    <property type="entry name" value="PAN2-PAN3 deadenylation complex catalytic subunit PAN2"/>
    <property type="match status" value="1"/>
</dbReference>
<dbReference type="Gene3D" id="3.90.70.10">
    <property type="entry name" value="Cysteine proteinases"/>
    <property type="match status" value="1"/>
</dbReference>
<dbReference type="Gene3D" id="3.30.420.10">
    <property type="entry name" value="Ribonuclease H-like superfamily/Ribonuclease H"/>
    <property type="match status" value="1"/>
</dbReference>
<dbReference type="Gene3D" id="2.130.10.10">
    <property type="entry name" value="YVTN repeat-like/Quinoprotein amine dehydrogenase"/>
    <property type="match status" value="1"/>
</dbReference>
<dbReference type="HAMAP" id="MF_03182">
    <property type="entry name" value="PAN2"/>
    <property type="match status" value="1"/>
</dbReference>
<dbReference type="InterPro" id="IPR013520">
    <property type="entry name" value="Exonuclease_RNaseT/DNA_pol3"/>
</dbReference>
<dbReference type="InterPro" id="IPR030843">
    <property type="entry name" value="PAN2"/>
</dbReference>
<dbReference type="InterPro" id="IPR050785">
    <property type="entry name" value="PAN2-PAN3_catalytic_subunit"/>
</dbReference>
<dbReference type="InterPro" id="IPR048841">
    <property type="entry name" value="PAN2_N"/>
</dbReference>
<dbReference type="InterPro" id="IPR028881">
    <property type="entry name" value="PAN2_UCH_dom"/>
</dbReference>
<dbReference type="InterPro" id="IPR038765">
    <property type="entry name" value="Papain-like_cys_pep_sf"/>
</dbReference>
<dbReference type="InterPro" id="IPR012337">
    <property type="entry name" value="RNaseH-like_sf"/>
</dbReference>
<dbReference type="InterPro" id="IPR036397">
    <property type="entry name" value="RNaseH_sf"/>
</dbReference>
<dbReference type="InterPro" id="IPR028889">
    <property type="entry name" value="USP_dom"/>
</dbReference>
<dbReference type="InterPro" id="IPR015943">
    <property type="entry name" value="WD40/YVTN_repeat-like_dom_sf"/>
</dbReference>
<dbReference type="InterPro" id="IPR036322">
    <property type="entry name" value="WD40_repeat_dom_sf"/>
</dbReference>
<dbReference type="PANTHER" id="PTHR15728">
    <property type="entry name" value="DEADENYLATION COMPLEX CATALYTIC SUBUNIT PAN2"/>
    <property type="match status" value="1"/>
</dbReference>
<dbReference type="PANTHER" id="PTHR15728:SF0">
    <property type="entry name" value="PAN2-PAN3 DEADENYLATION COMPLEX CATALYTIC SUBUNIT PAN2"/>
    <property type="match status" value="1"/>
</dbReference>
<dbReference type="Pfam" id="PF20770">
    <property type="entry name" value="PAN2_N"/>
    <property type="match status" value="1"/>
</dbReference>
<dbReference type="Pfam" id="PF00929">
    <property type="entry name" value="RNase_T"/>
    <property type="match status" value="1"/>
</dbReference>
<dbReference type="Pfam" id="PF13423">
    <property type="entry name" value="UCH_1"/>
    <property type="match status" value="1"/>
</dbReference>
<dbReference type="SMART" id="SM00479">
    <property type="entry name" value="EXOIII"/>
    <property type="match status" value="1"/>
</dbReference>
<dbReference type="SUPFAM" id="SSF54001">
    <property type="entry name" value="Cysteine proteinases"/>
    <property type="match status" value="1"/>
</dbReference>
<dbReference type="SUPFAM" id="SSF53098">
    <property type="entry name" value="Ribonuclease H-like"/>
    <property type="match status" value="1"/>
</dbReference>
<dbReference type="SUPFAM" id="SSF50978">
    <property type="entry name" value="WD40 repeat-like"/>
    <property type="match status" value="1"/>
</dbReference>
<dbReference type="PROSITE" id="PS50235">
    <property type="entry name" value="USP_3"/>
    <property type="match status" value="1"/>
</dbReference>
<gene>
    <name evidence="2" type="primary">Pan2</name>
    <name type="synonym">Kiaa0710</name>
    <name type="synonym">Usp52</name>
</gene>
<organism>
    <name type="scientific">Mus musculus</name>
    <name type="common">Mouse</name>
    <dbReference type="NCBI Taxonomy" id="10090"/>
    <lineage>
        <taxon>Eukaryota</taxon>
        <taxon>Metazoa</taxon>
        <taxon>Chordata</taxon>
        <taxon>Craniata</taxon>
        <taxon>Vertebrata</taxon>
        <taxon>Euteleostomi</taxon>
        <taxon>Mammalia</taxon>
        <taxon>Eutheria</taxon>
        <taxon>Euarchontoglires</taxon>
        <taxon>Glires</taxon>
        <taxon>Rodentia</taxon>
        <taxon>Myomorpha</taxon>
        <taxon>Muroidea</taxon>
        <taxon>Muridae</taxon>
        <taxon>Murinae</taxon>
        <taxon>Mus</taxon>
        <taxon>Mus</taxon>
    </lineage>
</organism>
<proteinExistence type="evidence at protein level"/>